<feature type="initiator methionine" description="Removed" evidence="1">
    <location>
        <position position="1"/>
    </location>
</feature>
<feature type="chain" id="PRO_0000418668" description="Reaction center protein L chain">
    <location>
        <begin position="2"/>
        <end position="279"/>
    </location>
</feature>
<feature type="transmembrane region" description="Helical" evidence="2">
    <location>
        <begin position="33"/>
        <end position="56"/>
    </location>
</feature>
<feature type="transmembrane region" description="Helical" evidence="2">
    <location>
        <begin position="85"/>
        <end position="113"/>
    </location>
</feature>
<feature type="transmembrane region" description="Helical" evidence="2">
    <location>
        <begin position="116"/>
        <end position="141"/>
    </location>
</feature>
<feature type="transmembrane region" description="Helical" evidence="2">
    <location>
        <begin position="171"/>
        <end position="200"/>
    </location>
</feature>
<feature type="transmembrane region" description="Helical" evidence="2">
    <location>
        <begin position="226"/>
        <end position="252"/>
    </location>
</feature>
<feature type="binding site" description="axial binding residue" evidence="1">
    <location>
        <position position="154"/>
    </location>
    <ligand>
        <name>(7R,8Z)-bacteriochlorophyll b</name>
        <dbReference type="ChEBI" id="CHEBI:30034"/>
    </ligand>
    <ligandPart>
        <name>Mg</name>
        <dbReference type="ChEBI" id="CHEBI:25107"/>
    </ligandPart>
</feature>
<feature type="binding site" description="axial binding residue" evidence="1">
    <location>
        <position position="174"/>
    </location>
    <ligand>
        <name>(7R,8Z)-bacteriochlorophyll b</name>
        <dbReference type="ChEBI" id="CHEBI:30034"/>
    </ligand>
    <ligandPart>
        <name>Mg</name>
        <dbReference type="ChEBI" id="CHEBI:25107"/>
    </ligandPart>
</feature>
<feature type="binding site" evidence="1">
    <location>
        <position position="191"/>
    </location>
    <ligand>
        <name>Fe cation</name>
        <dbReference type="ChEBI" id="CHEBI:24875"/>
    </ligand>
</feature>
<feature type="binding site" evidence="1">
    <location>
        <position position="217"/>
    </location>
    <ligand>
        <name>a ubiquinone</name>
        <dbReference type="ChEBI" id="CHEBI:16389"/>
    </ligand>
</feature>
<feature type="binding site" evidence="1">
    <location>
        <position position="231"/>
    </location>
    <ligand>
        <name>Fe cation</name>
        <dbReference type="ChEBI" id="CHEBI:24875"/>
    </ligand>
</feature>
<keyword id="KW-0076">Bacteriochlorophyll</keyword>
<keyword id="KW-0997">Cell inner membrane</keyword>
<keyword id="KW-1003">Cell membrane</keyword>
<keyword id="KW-0148">Chlorophyll</keyword>
<keyword id="KW-0157">Chromophore</keyword>
<keyword id="KW-0249">Electron transport</keyword>
<keyword id="KW-0359">Herbicide resistance</keyword>
<keyword id="KW-0408">Iron</keyword>
<keyword id="KW-0460">Magnesium</keyword>
<keyword id="KW-0472">Membrane</keyword>
<keyword id="KW-0479">Metal-binding</keyword>
<keyword id="KW-0602">Photosynthesis</keyword>
<keyword id="KW-0674">Reaction center</keyword>
<keyword id="KW-1185">Reference proteome</keyword>
<keyword id="KW-0812">Transmembrane</keyword>
<keyword id="KW-1133">Transmembrane helix</keyword>
<keyword id="KW-0813">Transport</keyword>
<gene>
    <name type="primary">pufL</name>
    <name type="ordered locus">RGE_33630</name>
</gene>
<protein>
    <recommendedName>
        <fullName>Reaction center protein L chain</fullName>
    </recommendedName>
    <alternativeName>
        <fullName>Photosynthetic reaction center L subunit</fullName>
    </alternativeName>
</protein>
<accession>I0HUL5</accession>
<accession>P51760</accession>
<organism>
    <name type="scientific">Rubrivivax gelatinosus (strain NBRC 100245 / IL144)</name>
    <dbReference type="NCBI Taxonomy" id="983917"/>
    <lineage>
        <taxon>Bacteria</taxon>
        <taxon>Pseudomonadati</taxon>
        <taxon>Pseudomonadota</taxon>
        <taxon>Betaproteobacteria</taxon>
        <taxon>Burkholderiales</taxon>
        <taxon>Sphaerotilaceae</taxon>
        <taxon>Rubrivivax</taxon>
    </lineage>
</organism>
<sequence>MAMLSFEKKYRVRGGTLVGGDLFDFWVGPFYVGFFGVTTLFFSVLGTALIIWGASQGPTWNLWQISIAPPDLKYGLGVAPLMEGGLWQIITVCAIGAFVSWALREVEICRKLGMQYHVPIAFSFAILAYVTLVVIRPILMGAWGHGFPYGIFSHLDWVSNVGYQYLHFHYNPAHMLAITFFFTTTLAMSMHGGLILSAANPKKGEPMKTTDHEDTFFRDAVGYSIGSLGIHRLGLFLALSAAFWSAVCIVISGPFWTRGWPEWWGWWLNLPIWSQWPLK</sequence>
<evidence type="ECO:0000250" key="1"/>
<evidence type="ECO:0000255" key="2"/>
<evidence type="ECO:0000305" key="3"/>
<dbReference type="EMBL" id="D16822">
    <property type="protein sequence ID" value="BAA04100.1"/>
    <property type="molecule type" value="Genomic_DNA"/>
</dbReference>
<dbReference type="EMBL" id="AB034704">
    <property type="protein sequence ID" value="BAA94042.1"/>
    <property type="molecule type" value="Genomic_DNA"/>
</dbReference>
<dbReference type="EMBL" id="AP012320">
    <property type="protein sequence ID" value="BAL96702.1"/>
    <property type="molecule type" value="Genomic_DNA"/>
</dbReference>
<dbReference type="PIR" id="E49964">
    <property type="entry name" value="E49964"/>
</dbReference>
<dbReference type="PIR" id="T50889">
    <property type="entry name" value="T50889"/>
</dbReference>
<dbReference type="SMR" id="I0HUL5"/>
<dbReference type="STRING" id="983917.RGE_33630"/>
<dbReference type="KEGG" id="rge:RGE_33630"/>
<dbReference type="PATRIC" id="fig|983917.3.peg.3290"/>
<dbReference type="eggNOG" id="ENOG502Z7K3">
    <property type="taxonomic scope" value="Bacteria"/>
</dbReference>
<dbReference type="HOGENOM" id="CLU_078782_0_0_4"/>
<dbReference type="Proteomes" id="UP000007883">
    <property type="component" value="Chromosome"/>
</dbReference>
<dbReference type="GO" id="GO:0005886">
    <property type="term" value="C:plasma membrane"/>
    <property type="evidence" value="ECO:0007669"/>
    <property type="project" value="UniProtKB-SubCell"/>
</dbReference>
<dbReference type="GO" id="GO:0030077">
    <property type="term" value="C:plasma membrane light-harvesting complex"/>
    <property type="evidence" value="ECO:0007669"/>
    <property type="project" value="InterPro"/>
</dbReference>
<dbReference type="GO" id="GO:0042314">
    <property type="term" value="F:bacteriochlorophyll binding"/>
    <property type="evidence" value="ECO:0007669"/>
    <property type="project" value="UniProtKB-KW"/>
</dbReference>
<dbReference type="GO" id="GO:0045156">
    <property type="term" value="F:electron transporter, transferring electrons within the cyclic electron transport pathway of photosynthesis activity"/>
    <property type="evidence" value="ECO:0007669"/>
    <property type="project" value="InterPro"/>
</dbReference>
<dbReference type="GO" id="GO:0046872">
    <property type="term" value="F:metal ion binding"/>
    <property type="evidence" value="ECO:0007669"/>
    <property type="project" value="UniProtKB-KW"/>
</dbReference>
<dbReference type="GO" id="GO:0009772">
    <property type="term" value="P:photosynthetic electron transport in photosystem II"/>
    <property type="evidence" value="ECO:0007669"/>
    <property type="project" value="InterPro"/>
</dbReference>
<dbReference type="GO" id="GO:0009635">
    <property type="term" value="P:response to herbicide"/>
    <property type="evidence" value="ECO:0007669"/>
    <property type="project" value="UniProtKB-KW"/>
</dbReference>
<dbReference type="CDD" id="cd09290">
    <property type="entry name" value="Photo-RC_L"/>
    <property type="match status" value="1"/>
</dbReference>
<dbReference type="Gene3D" id="1.20.85.10">
    <property type="entry name" value="Photosystem II protein D1-like"/>
    <property type="match status" value="2"/>
</dbReference>
<dbReference type="InterPro" id="IPR036854">
    <property type="entry name" value="Photo_II_D1/D2_sf"/>
</dbReference>
<dbReference type="InterPro" id="IPR005871">
    <property type="entry name" value="Photo_RC_L"/>
</dbReference>
<dbReference type="InterPro" id="IPR000484">
    <property type="entry name" value="Photo_RC_L/M"/>
</dbReference>
<dbReference type="InterPro" id="IPR055265">
    <property type="entry name" value="Photo_RC_L/M_CS"/>
</dbReference>
<dbReference type="NCBIfam" id="TIGR01157">
    <property type="entry name" value="pufL"/>
    <property type="match status" value="1"/>
</dbReference>
<dbReference type="Pfam" id="PF00124">
    <property type="entry name" value="Photo_RC"/>
    <property type="match status" value="1"/>
</dbReference>
<dbReference type="PRINTS" id="PR00256">
    <property type="entry name" value="REACTNCENTRE"/>
</dbReference>
<dbReference type="SUPFAM" id="SSF81483">
    <property type="entry name" value="Bacterial photosystem II reaction centre, L and M subunits"/>
    <property type="match status" value="1"/>
</dbReference>
<dbReference type="PROSITE" id="PS00244">
    <property type="entry name" value="REACTION_CENTER"/>
    <property type="match status" value="1"/>
</dbReference>
<reference key="1">
    <citation type="journal article" date="1994" name="J. Biol. Chem.">
        <title>Primary structure and transcription of genes encoding B870 and photosynthetic reaction center apoproteins from Rubrivivax gelatinosus.</title>
        <authorList>
            <person name="Nagashima K.V.P."/>
            <person name="Matsuura K."/>
            <person name="Ohyama S."/>
            <person name="Shimada K."/>
        </authorList>
    </citation>
    <scope>NUCLEOTIDE SEQUENCE [GENOMIC DNA]</scope>
    <source>
        <strain>NBRC 100245 / IL144</strain>
    </source>
</reference>
<reference key="2">
    <citation type="journal article" date="2001" name="J. Mol. Evol.">
        <title>Horizontal transfer of the photosynthesis gene cluster and operon rearrangement in purple bacteria.</title>
        <authorList>
            <person name="Igarashi N."/>
            <person name="Harada J."/>
            <person name="Nagashima S."/>
            <person name="Matsuura K."/>
            <person name="Shimada K."/>
            <person name="Nagashima K.V.P."/>
        </authorList>
    </citation>
    <scope>NUCLEOTIDE SEQUENCE [GENOMIC DNA]</scope>
    <source>
        <strain>NBRC 100245 / IL144</strain>
    </source>
</reference>
<reference key="3">
    <citation type="journal article" date="2012" name="J. Bacteriol.">
        <title>Complete genome sequence of phototrophic betaproteobacterium Rubrivivax gelatinosus IL144.</title>
        <authorList>
            <person name="Nagashima S."/>
            <person name="Kamimura A."/>
            <person name="Shimizu T."/>
            <person name="Nakamura-Isaki S."/>
            <person name="Aono E."/>
            <person name="Sakamoto K."/>
            <person name="Ichikawa N."/>
            <person name="Nakazawa H."/>
            <person name="Sekine M."/>
            <person name="Yamazaki S."/>
            <person name="Fujita N."/>
            <person name="Shimada K."/>
            <person name="Hanada S."/>
            <person name="Nagashima K.V."/>
        </authorList>
    </citation>
    <scope>NUCLEOTIDE SEQUENCE [LARGE SCALE GENOMIC DNA]</scope>
    <source>
        <strain>NBRC 100245 / IL144</strain>
    </source>
</reference>
<name>RCEL_RUBGI</name>
<proteinExistence type="inferred from homology"/>
<comment type="function">
    <text>The reaction center is a membrane-bound complex that mediates the initial photochemical event in the electron transfer process of photosynthesis.</text>
</comment>
<comment type="subunit">
    <text>Reaction center is composed of four bacteriochlorophylls, two bacteriopheophytins, two ubiquinones, one iron, and three highly hydrophobic polypeptide chains (designated L, M, and H).</text>
</comment>
<comment type="subcellular location">
    <subcellularLocation>
        <location evidence="1">Cell inner membrane</location>
        <topology evidence="1">Multi-pass membrane protein</topology>
    </subcellularLocation>
</comment>
<comment type="similarity">
    <text evidence="3">Belongs to the reaction center PufL/M/PsbA/D family.</text>
</comment>